<dbReference type="EC" id="2.7.7.27" evidence="1"/>
<dbReference type="EMBL" id="CP000507">
    <property type="protein sequence ID" value="ABM00655.1"/>
    <property type="molecule type" value="Genomic_DNA"/>
</dbReference>
<dbReference type="RefSeq" id="WP_011760561.1">
    <property type="nucleotide sequence ID" value="NC_008700.1"/>
</dbReference>
<dbReference type="SMR" id="A1S8E8"/>
<dbReference type="STRING" id="326297.Sama_2450"/>
<dbReference type="KEGG" id="saz:Sama_2450"/>
<dbReference type="eggNOG" id="COG0448">
    <property type="taxonomic scope" value="Bacteria"/>
</dbReference>
<dbReference type="HOGENOM" id="CLU_029499_14_1_6"/>
<dbReference type="OrthoDB" id="9801810at2"/>
<dbReference type="UniPathway" id="UPA00164"/>
<dbReference type="Proteomes" id="UP000009175">
    <property type="component" value="Chromosome"/>
</dbReference>
<dbReference type="GO" id="GO:0005524">
    <property type="term" value="F:ATP binding"/>
    <property type="evidence" value="ECO:0007669"/>
    <property type="project" value="UniProtKB-KW"/>
</dbReference>
<dbReference type="GO" id="GO:0008878">
    <property type="term" value="F:glucose-1-phosphate adenylyltransferase activity"/>
    <property type="evidence" value="ECO:0007669"/>
    <property type="project" value="UniProtKB-UniRule"/>
</dbReference>
<dbReference type="GO" id="GO:0005978">
    <property type="term" value="P:glycogen biosynthetic process"/>
    <property type="evidence" value="ECO:0007669"/>
    <property type="project" value="UniProtKB-UniRule"/>
</dbReference>
<dbReference type="CDD" id="cd02508">
    <property type="entry name" value="ADP_Glucose_PP"/>
    <property type="match status" value="1"/>
</dbReference>
<dbReference type="CDD" id="cd04651">
    <property type="entry name" value="LbH_G1P_AT_C"/>
    <property type="match status" value="1"/>
</dbReference>
<dbReference type="Gene3D" id="2.160.10.10">
    <property type="entry name" value="Hexapeptide repeat proteins"/>
    <property type="match status" value="1"/>
</dbReference>
<dbReference type="Gene3D" id="3.90.550.10">
    <property type="entry name" value="Spore Coat Polysaccharide Biosynthesis Protein SpsA, Chain A"/>
    <property type="match status" value="1"/>
</dbReference>
<dbReference type="HAMAP" id="MF_00624">
    <property type="entry name" value="GlgC"/>
    <property type="match status" value="1"/>
</dbReference>
<dbReference type="InterPro" id="IPR011831">
    <property type="entry name" value="ADP-Glc_PPase"/>
</dbReference>
<dbReference type="InterPro" id="IPR005836">
    <property type="entry name" value="ADP_Glu_pyroP_CS"/>
</dbReference>
<dbReference type="InterPro" id="IPR023049">
    <property type="entry name" value="GlgC_bac"/>
</dbReference>
<dbReference type="InterPro" id="IPR056818">
    <property type="entry name" value="GlmU/GlgC-like_hexapep"/>
</dbReference>
<dbReference type="InterPro" id="IPR005835">
    <property type="entry name" value="NTP_transferase_dom"/>
</dbReference>
<dbReference type="InterPro" id="IPR029044">
    <property type="entry name" value="Nucleotide-diphossugar_trans"/>
</dbReference>
<dbReference type="InterPro" id="IPR011004">
    <property type="entry name" value="Trimer_LpxA-like_sf"/>
</dbReference>
<dbReference type="NCBIfam" id="TIGR02091">
    <property type="entry name" value="glgC"/>
    <property type="match status" value="1"/>
</dbReference>
<dbReference type="NCBIfam" id="NF001947">
    <property type="entry name" value="PRK00725.1"/>
    <property type="match status" value="1"/>
</dbReference>
<dbReference type="NCBIfam" id="NF002023">
    <property type="entry name" value="PRK00844.1"/>
    <property type="match status" value="1"/>
</dbReference>
<dbReference type="PANTHER" id="PTHR43523:SF2">
    <property type="entry name" value="GLUCOSE-1-PHOSPHATE ADENYLYLTRANSFERASE"/>
    <property type="match status" value="1"/>
</dbReference>
<dbReference type="PANTHER" id="PTHR43523">
    <property type="entry name" value="GLUCOSE-1-PHOSPHATE ADENYLYLTRANSFERASE-RELATED"/>
    <property type="match status" value="1"/>
</dbReference>
<dbReference type="Pfam" id="PF24894">
    <property type="entry name" value="Hexapep_GlmU"/>
    <property type="match status" value="1"/>
</dbReference>
<dbReference type="Pfam" id="PF00483">
    <property type="entry name" value="NTP_transferase"/>
    <property type="match status" value="1"/>
</dbReference>
<dbReference type="SUPFAM" id="SSF53448">
    <property type="entry name" value="Nucleotide-diphospho-sugar transferases"/>
    <property type="match status" value="1"/>
</dbReference>
<dbReference type="SUPFAM" id="SSF51161">
    <property type="entry name" value="Trimeric LpxA-like enzymes"/>
    <property type="match status" value="1"/>
</dbReference>
<dbReference type="PROSITE" id="PS00808">
    <property type="entry name" value="ADP_GLC_PYROPHOSPH_1"/>
    <property type="match status" value="1"/>
</dbReference>
<dbReference type="PROSITE" id="PS00809">
    <property type="entry name" value="ADP_GLC_PYROPHOSPH_2"/>
    <property type="match status" value="1"/>
</dbReference>
<dbReference type="PROSITE" id="PS00810">
    <property type="entry name" value="ADP_GLC_PYROPHOSPH_3"/>
    <property type="match status" value="1"/>
</dbReference>
<evidence type="ECO:0000255" key="1">
    <source>
        <dbReference type="HAMAP-Rule" id="MF_00624"/>
    </source>
</evidence>
<sequence>MPNHSPRFISNLTRETYALILAGGRGSRLFELTDWRAKPALYFGGKFRVIDFPLSNCVNSGIRRIGVVTQYQSHSLIRHVMRGWGHFKRELGESVEILPASQRYSESWYQGTADAVFQNIDIIRHELPRYVMILSGDHVYRMDYAGMLAAHAQSGADMTVCCQEVPVAEAAGSFGVMEVAEDMRVVGFEEKPANPSCLPHDPERCLASMGNYVFNTEFLFDQLRKDAENVSSERDFGKDIIPSIIREHKVFAYAFKSGLGAGQDYWRDVGTLDTFWQANMELLSPEPHLNLYDAKWPIWTYQEQLPPAKFVFDDEDRRGMATDSIVSGGCIISGAKVKRSVLFNEVRICSYSEVEGAVILPDVVVLRNCRLKNVIIDRGCVIPEGMVIGHNHDHDRARGFRVTDKGVVLITREMLGLPVGFE</sequence>
<accession>A1S8E8</accession>
<protein>
    <recommendedName>
        <fullName evidence="1">Glucose-1-phosphate adenylyltransferase</fullName>
        <ecNumber evidence="1">2.7.7.27</ecNumber>
    </recommendedName>
    <alternativeName>
        <fullName evidence="1">ADP-glucose pyrophosphorylase</fullName>
        <shortName evidence="1">ADPGlc PPase</shortName>
    </alternativeName>
    <alternativeName>
        <fullName evidence="1">ADP-glucose synthase</fullName>
    </alternativeName>
</protein>
<gene>
    <name evidence="1" type="primary">glgC</name>
    <name type="ordered locus">Sama_2450</name>
</gene>
<feature type="chain" id="PRO_1000051581" description="Glucose-1-phosphate adenylyltransferase">
    <location>
        <begin position="1"/>
        <end position="422"/>
    </location>
</feature>
<feature type="binding site" evidence="1">
    <location>
        <position position="109"/>
    </location>
    <ligand>
        <name>alpha-D-glucose 1-phosphate</name>
        <dbReference type="ChEBI" id="CHEBI:58601"/>
    </ligand>
</feature>
<feature type="binding site" evidence="1">
    <location>
        <position position="175"/>
    </location>
    <ligand>
        <name>alpha-D-glucose 1-phosphate</name>
        <dbReference type="ChEBI" id="CHEBI:58601"/>
    </ligand>
</feature>
<feature type="binding site" evidence="1">
    <location>
        <begin position="190"/>
        <end position="191"/>
    </location>
    <ligand>
        <name>alpha-D-glucose 1-phosphate</name>
        <dbReference type="ChEBI" id="CHEBI:58601"/>
    </ligand>
</feature>
<feature type="binding site" evidence="1">
    <location>
        <position position="208"/>
    </location>
    <ligand>
        <name>alpha-D-glucose 1-phosphate</name>
        <dbReference type="ChEBI" id="CHEBI:58601"/>
    </ligand>
</feature>
<comment type="function">
    <text evidence="1">Involved in the biosynthesis of ADP-glucose, a building block required for the elongation reactions to produce glycogen. Catalyzes the reaction between ATP and alpha-D-glucose 1-phosphate (G1P) to produce pyrophosphate and ADP-Glc.</text>
</comment>
<comment type="catalytic activity">
    <reaction evidence="1">
        <text>alpha-D-glucose 1-phosphate + ATP + H(+) = ADP-alpha-D-glucose + diphosphate</text>
        <dbReference type="Rhea" id="RHEA:12120"/>
        <dbReference type="ChEBI" id="CHEBI:15378"/>
        <dbReference type="ChEBI" id="CHEBI:30616"/>
        <dbReference type="ChEBI" id="CHEBI:33019"/>
        <dbReference type="ChEBI" id="CHEBI:57498"/>
        <dbReference type="ChEBI" id="CHEBI:58601"/>
        <dbReference type="EC" id="2.7.7.27"/>
    </reaction>
</comment>
<comment type="pathway">
    <text evidence="1">Glycan biosynthesis; glycogen biosynthesis.</text>
</comment>
<comment type="subunit">
    <text evidence="1">Homotetramer.</text>
</comment>
<comment type="similarity">
    <text evidence="1">Belongs to the bacterial/plant glucose-1-phosphate adenylyltransferase family.</text>
</comment>
<keyword id="KW-0067">ATP-binding</keyword>
<keyword id="KW-0119">Carbohydrate metabolism</keyword>
<keyword id="KW-0320">Glycogen biosynthesis</keyword>
<keyword id="KW-0321">Glycogen metabolism</keyword>
<keyword id="KW-0547">Nucleotide-binding</keyword>
<keyword id="KW-0548">Nucleotidyltransferase</keyword>
<keyword id="KW-1185">Reference proteome</keyword>
<keyword id="KW-0808">Transferase</keyword>
<reference key="1">
    <citation type="submission" date="2006-12" db="EMBL/GenBank/DDBJ databases">
        <title>Complete sequence of Shewanella amazonensis SB2B.</title>
        <authorList>
            <consortium name="US DOE Joint Genome Institute"/>
            <person name="Copeland A."/>
            <person name="Lucas S."/>
            <person name="Lapidus A."/>
            <person name="Barry K."/>
            <person name="Detter J.C."/>
            <person name="Glavina del Rio T."/>
            <person name="Hammon N."/>
            <person name="Israni S."/>
            <person name="Dalin E."/>
            <person name="Tice H."/>
            <person name="Pitluck S."/>
            <person name="Munk A.C."/>
            <person name="Brettin T."/>
            <person name="Bruce D."/>
            <person name="Han C."/>
            <person name="Tapia R."/>
            <person name="Gilna P."/>
            <person name="Schmutz J."/>
            <person name="Larimer F."/>
            <person name="Land M."/>
            <person name="Hauser L."/>
            <person name="Kyrpides N."/>
            <person name="Mikhailova N."/>
            <person name="Fredrickson J."/>
            <person name="Richardson P."/>
        </authorList>
    </citation>
    <scope>NUCLEOTIDE SEQUENCE [LARGE SCALE GENOMIC DNA]</scope>
    <source>
        <strain>ATCC BAA-1098 / SB2B</strain>
    </source>
</reference>
<name>GLGC_SHEAM</name>
<proteinExistence type="inferred from homology"/>
<organism>
    <name type="scientific">Shewanella amazonensis (strain ATCC BAA-1098 / SB2B)</name>
    <dbReference type="NCBI Taxonomy" id="326297"/>
    <lineage>
        <taxon>Bacteria</taxon>
        <taxon>Pseudomonadati</taxon>
        <taxon>Pseudomonadota</taxon>
        <taxon>Gammaproteobacteria</taxon>
        <taxon>Alteromonadales</taxon>
        <taxon>Shewanellaceae</taxon>
        <taxon>Shewanella</taxon>
    </lineage>
</organism>